<name>DXS_CAMHC</name>
<gene>
    <name evidence="1" type="primary">dxs</name>
    <name type="ordered locus">CHAB381_1297</name>
</gene>
<reference key="1">
    <citation type="submission" date="2007-07" db="EMBL/GenBank/DDBJ databases">
        <title>Complete genome sequence of Campylobacter hominis ATCC BAA-381, a commensal isolated from the human gastrointestinal tract.</title>
        <authorList>
            <person name="Fouts D.E."/>
            <person name="Mongodin E.F."/>
            <person name="Puiu D."/>
            <person name="Sebastian Y."/>
            <person name="Miller W.G."/>
            <person name="Mandrell R.E."/>
            <person name="Nelson K.E."/>
        </authorList>
    </citation>
    <scope>NUCLEOTIDE SEQUENCE [LARGE SCALE GENOMIC DNA]</scope>
    <source>
        <strain>ATCC BAA-381 / DSM 21671 / CCUG 45161 / LMG 19568 / NCTC 13146 / CH001A</strain>
    </source>
</reference>
<dbReference type="EC" id="2.2.1.7" evidence="1"/>
<dbReference type="EMBL" id="CP000776">
    <property type="protein sequence ID" value="ABS51357.1"/>
    <property type="molecule type" value="Genomic_DNA"/>
</dbReference>
<dbReference type="RefSeq" id="WP_012109149.1">
    <property type="nucleotide sequence ID" value="NC_009714.1"/>
</dbReference>
<dbReference type="SMR" id="A7I2V7"/>
<dbReference type="STRING" id="360107.CHAB381_1297"/>
<dbReference type="KEGG" id="cha:CHAB381_1297"/>
<dbReference type="eggNOG" id="COG1154">
    <property type="taxonomic scope" value="Bacteria"/>
</dbReference>
<dbReference type="HOGENOM" id="CLU_009227_1_4_7"/>
<dbReference type="OrthoDB" id="9803371at2"/>
<dbReference type="UniPathway" id="UPA00064">
    <property type="reaction ID" value="UER00091"/>
</dbReference>
<dbReference type="Proteomes" id="UP000002407">
    <property type="component" value="Chromosome"/>
</dbReference>
<dbReference type="GO" id="GO:0005829">
    <property type="term" value="C:cytosol"/>
    <property type="evidence" value="ECO:0007669"/>
    <property type="project" value="TreeGrafter"/>
</dbReference>
<dbReference type="GO" id="GO:0008661">
    <property type="term" value="F:1-deoxy-D-xylulose-5-phosphate synthase activity"/>
    <property type="evidence" value="ECO:0007669"/>
    <property type="project" value="UniProtKB-UniRule"/>
</dbReference>
<dbReference type="GO" id="GO:0000287">
    <property type="term" value="F:magnesium ion binding"/>
    <property type="evidence" value="ECO:0007669"/>
    <property type="project" value="UniProtKB-UniRule"/>
</dbReference>
<dbReference type="GO" id="GO:0030976">
    <property type="term" value="F:thiamine pyrophosphate binding"/>
    <property type="evidence" value="ECO:0007669"/>
    <property type="project" value="UniProtKB-UniRule"/>
</dbReference>
<dbReference type="GO" id="GO:0052865">
    <property type="term" value="P:1-deoxy-D-xylulose 5-phosphate biosynthetic process"/>
    <property type="evidence" value="ECO:0007669"/>
    <property type="project" value="UniProtKB-UniPathway"/>
</dbReference>
<dbReference type="GO" id="GO:0019288">
    <property type="term" value="P:isopentenyl diphosphate biosynthetic process, methylerythritol 4-phosphate pathway"/>
    <property type="evidence" value="ECO:0007669"/>
    <property type="project" value="TreeGrafter"/>
</dbReference>
<dbReference type="GO" id="GO:0016114">
    <property type="term" value="P:terpenoid biosynthetic process"/>
    <property type="evidence" value="ECO:0007669"/>
    <property type="project" value="UniProtKB-UniRule"/>
</dbReference>
<dbReference type="GO" id="GO:0009228">
    <property type="term" value="P:thiamine biosynthetic process"/>
    <property type="evidence" value="ECO:0007669"/>
    <property type="project" value="UniProtKB-UniRule"/>
</dbReference>
<dbReference type="CDD" id="cd02007">
    <property type="entry name" value="TPP_DXS"/>
    <property type="match status" value="1"/>
</dbReference>
<dbReference type="CDD" id="cd07033">
    <property type="entry name" value="TPP_PYR_DXS_TK_like"/>
    <property type="match status" value="1"/>
</dbReference>
<dbReference type="Gene3D" id="3.40.50.920">
    <property type="match status" value="1"/>
</dbReference>
<dbReference type="Gene3D" id="3.40.50.970">
    <property type="match status" value="2"/>
</dbReference>
<dbReference type="HAMAP" id="MF_00315">
    <property type="entry name" value="DXP_synth"/>
    <property type="match status" value="1"/>
</dbReference>
<dbReference type="InterPro" id="IPR005477">
    <property type="entry name" value="Dxylulose-5-P_synthase"/>
</dbReference>
<dbReference type="InterPro" id="IPR029061">
    <property type="entry name" value="THDP-binding"/>
</dbReference>
<dbReference type="InterPro" id="IPR009014">
    <property type="entry name" value="Transketo_C/PFOR_II"/>
</dbReference>
<dbReference type="InterPro" id="IPR005475">
    <property type="entry name" value="Transketolase-like_Pyr-bd"/>
</dbReference>
<dbReference type="InterPro" id="IPR020826">
    <property type="entry name" value="Transketolase_BS"/>
</dbReference>
<dbReference type="InterPro" id="IPR033248">
    <property type="entry name" value="Transketolase_C"/>
</dbReference>
<dbReference type="InterPro" id="IPR049557">
    <property type="entry name" value="Transketolase_CS"/>
</dbReference>
<dbReference type="NCBIfam" id="TIGR00204">
    <property type="entry name" value="dxs"/>
    <property type="match status" value="1"/>
</dbReference>
<dbReference type="NCBIfam" id="NF003933">
    <property type="entry name" value="PRK05444.2-2"/>
    <property type="match status" value="1"/>
</dbReference>
<dbReference type="PANTHER" id="PTHR43322">
    <property type="entry name" value="1-D-DEOXYXYLULOSE 5-PHOSPHATE SYNTHASE-RELATED"/>
    <property type="match status" value="1"/>
</dbReference>
<dbReference type="PANTHER" id="PTHR43322:SF5">
    <property type="entry name" value="1-DEOXY-D-XYLULOSE-5-PHOSPHATE SYNTHASE, CHLOROPLASTIC"/>
    <property type="match status" value="1"/>
</dbReference>
<dbReference type="Pfam" id="PF13292">
    <property type="entry name" value="DXP_synthase_N"/>
    <property type="match status" value="1"/>
</dbReference>
<dbReference type="Pfam" id="PF02779">
    <property type="entry name" value="Transket_pyr"/>
    <property type="match status" value="1"/>
</dbReference>
<dbReference type="Pfam" id="PF02780">
    <property type="entry name" value="Transketolase_C"/>
    <property type="match status" value="1"/>
</dbReference>
<dbReference type="SMART" id="SM00861">
    <property type="entry name" value="Transket_pyr"/>
    <property type="match status" value="1"/>
</dbReference>
<dbReference type="SUPFAM" id="SSF52518">
    <property type="entry name" value="Thiamin diphosphate-binding fold (THDP-binding)"/>
    <property type="match status" value="2"/>
</dbReference>
<dbReference type="SUPFAM" id="SSF52922">
    <property type="entry name" value="TK C-terminal domain-like"/>
    <property type="match status" value="1"/>
</dbReference>
<dbReference type="PROSITE" id="PS00801">
    <property type="entry name" value="TRANSKETOLASE_1"/>
    <property type="match status" value="1"/>
</dbReference>
<dbReference type="PROSITE" id="PS00802">
    <property type="entry name" value="TRANSKETOLASE_2"/>
    <property type="match status" value="1"/>
</dbReference>
<feature type="chain" id="PRO_1000019015" description="1-deoxy-D-xylulose-5-phosphate synthase">
    <location>
        <begin position="1"/>
        <end position="607"/>
    </location>
</feature>
<feature type="binding site" evidence="1">
    <location>
        <position position="63"/>
    </location>
    <ligand>
        <name>thiamine diphosphate</name>
        <dbReference type="ChEBI" id="CHEBI:58937"/>
    </ligand>
</feature>
<feature type="binding site" evidence="1">
    <location>
        <begin position="104"/>
        <end position="106"/>
    </location>
    <ligand>
        <name>thiamine diphosphate</name>
        <dbReference type="ChEBI" id="CHEBI:58937"/>
    </ligand>
</feature>
<feature type="binding site" evidence="1">
    <location>
        <position position="135"/>
    </location>
    <ligand>
        <name>Mg(2+)</name>
        <dbReference type="ChEBI" id="CHEBI:18420"/>
    </ligand>
</feature>
<feature type="binding site" evidence="1">
    <location>
        <begin position="136"/>
        <end position="137"/>
    </location>
    <ligand>
        <name>thiamine diphosphate</name>
        <dbReference type="ChEBI" id="CHEBI:58937"/>
    </ligand>
</feature>
<feature type="binding site" evidence="1">
    <location>
        <position position="164"/>
    </location>
    <ligand>
        <name>Mg(2+)</name>
        <dbReference type="ChEBI" id="CHEBI:18420"/>
    </ligand>
</feature>
<feature type="binding site" evidence="1">
    <location>
        <position position="164"/>
    </location>
    <ligand>
        <name>thiamine diphosphate</name>
        <dbReference type="ChEBI" id="CHEBI:58937"/>
    </ligand>
</feature>
<feature type="binding site" evidence="1">
    <location>
        <position position="271"/>
    </location>
    <ligand>
        <name>thiamine diphosphate</name>
        <dbReference type="ChEBI" id="CHEBI:58937"/>
    </ligand>
</feature>
<feature type="binding site" evidence="1">
    <location>
        <position position="351"/>
    </location>
    <ligand>
        <name>thiamine diphosphate</name>
        <dbReference type="ChEBI" id="CHEBI:58937"/>
    </ligand>
</feature>
<keyword id="KW-0414">Isoprene biosynthesis</keyword>
<keyword id="KW-0460">Magnesium</keyword>
<keyword id="KW-0479">Metal-binding</keyword>
<keyword id="KW-1185">Reference proteome</keyword>
<keyword id="KW-0784">Thiamine biosynthesis</keyword>
<keyword id="KW-0786">Thiamine pyrophosphate</keyword>
<keyword id="KW-0808">Transferase</keyword>
<protein>
    <recommendedName>
        <fullName evidence="1">1-deoxy-D-xylulose-5-phosphate synthase</fullName>
        <ecNumber evidence="1">2.2.1.7</ecNumber>
    </recommendedName>
    <alternativeName>
        <fullName evidence="1">1-deoxyxylulose-5-phosphate synthase</fullName>
        <shortName evidence="1">DXP synthase</shortName>
        <shortName evidence="1">DXPS</shortName>
    </alternativeName>
</protein>
<sequence length="607" mass="67719">MDIKNKNLTELNELCKQIRERILEVVSQNGGHLSSNMGAVELIVAMHYVFDPDSDPFIFDVSHQSYAHKLLTGRWDEFSSLRQLGGISGYTKPKESKFDYFVAGHSSTSISLAVGAAKAIKLKGENRIPVALIGDGAMSAGMAYEAMNELGERKYPCIIILNDNEMSISRPIGAISKYLSQMMAGEFYQKFKGRVNQLLSYIPDGAAYMAKRFEEGFRLITPGMLFEELGLEYIGPVNGHDLADLISAFKVAKSMKKPVIVHTQTIKGKGYEKAEGFDEHWHGVGPFDLQSGEPKKHAKRSATQIYSEALLNLAAKHKNVVGVTAAMPTGTGMDKLIEAFPERFWDVAIAEQHAVTSMAAMAKEGFKPYITIYSTFMQRAYDQVIHDLAIMNLSAVIAMDRAGIVGEDGETHEGCFDISFLNAIPNVSMCAPRDEQSFKDMIEYSYVHEGLLAIRYPRGSFILHEQFKDAPKISRGKSVLLRENKNAKTALIGYGNGVGRAYEVSIKLDFETDLIDLVFAKPLDKEFLINLAKKDKIWYIFSDSVKKGGIGDILSAFLQENKIYDVEINTFEYDDKFLPHGKTPDVEYFLGLDIDSLAKKILNDKKY</sequence>
<comment type="function">
    <text evidence="1">Catalyzes the acyloin condensation reaction between C atoms 2 and 3 of pyruvate and glyceraldehyde 3-phosphate to yield 1-deoxy-D-xylulose-5-phosphate (DXP).</text>
</comment>
<comment type="catalytic activity">
    <reaction evidence="1">
        <text>D-glyceraldehyde 3-phosphate + pyruvate + H(+) = 1-deoxy-D-xylulose 5-phosphate + CO2</text>
        <dbReference type="Rhea" id="RHEA:12605"/>
        <dbReference type="ChEBI" id="CHEBI:15361"/>
        <dbReference type="ChEBI" id="CHEBI:15378"/>
        <dbReference type="ChEBI" id="CHEBI:16526"/>
        <dbReference type="ChEBI" id="CHEBI:57792"/>
        <dbReference type="ChEBI" id="CHEBI:59776"/>
        <dbReference type="EC" id="2.2.1.7"/>
    </reaction>
</comment>
<comment type="cofactor">
    <cofactor evidence="1">
        <name>Mg(2+)</name>
        <dbReference type="ChEBI" id="CHEBI:18420"/>
    </cofactor>
    <text evidence="1">Binds 1 Mg(2+) ion per subunit.</text>
</comment>
<comment type="cofactor">
    <cofactor evidence="1">
        <name>thiamine diphosphate</name>
        <dbReference type="ChEBI" id="CHEBI:58937"/>
    </cofactor>
    <text evidence="1">Binds 1 thiamine pyrophosphate per subunit.</text>
</comment>
<comment type="pathway">
    <text evidence="1">Metabolic intermediate biosynthesis; 1-deoxy-D-xylulose 5-phosphate biosynthesis; 1-deoxy-D-xylulose 5-phosphate from D-glyceraldehyde 3-phosphate and pyruvate: step 1/1.</text>
</comment>
<comment type="subunit">
    <text evidence="1">Homodimer.</text>
</comment>
<comment type="similarity">
    <text evidence="1">Belongs to the transketolase family. DXPS subfamily.</text>
</comment>
<proteinExistence type="inferred from homology"/>
<accession>A7I2V7</accession>
<evidence type="ECO:0000255" key="1">
    <source>
        <dbReference type="HAMAP-Rule" id="MF_00315"/>
    </source>
</evidence>
<organism>
    <name type="scientific">Campylobacter hominis (strain ATCC BAA-381 / DSM 21671 / CCUG 45161 / LMG 19568 / NCTC 13146 / CH001A)</name>
    <dbReference type="NCBI Taxonomy" id="360107"/>
    <lineage>
        <taxon>Bacteria</taxon>
        <taxon>Pseudomonadati</taxon>
        <taxon>Campylobacterota</taxon>
        <taxon>Epsilonproteobacteria</taxon>
        <taxon>Campylobacterales</taxon>
        <taxon>Campylobacteraceae</taxon>
        <taxon>Campylobacter</taxon>
    </lineage>
</organism>